<keyword id="KW-1185">Reference proteome</keyword>
<proteinExistence type="inferred from homology"/>
<protein>
    <recommendedName>
        <fullName evidence="1">UPF0340 protein EF_1967</fullName>
    </recommendedName>
</protein>
<comment type="similarity">
    <text evidence="1">Belongs to the UPF0340 family.</text>
</comment>
<name>Y1967_ENTFA</name>
<evidence type="ECO:0000255" key="1">
    <source>
        <dbReference type="HAMAP-Rule" id="MF_00800"/>
    </source>
</evidence>
<feature type="chain" id="PRO_0000213006" description="UPF0340 protein EF_1967">
    <location>
        <begin position="1"/>
        <end position="189"/>
    </location>
</feature>
<dbReference type="EMBL" id="AE016830">
    <property type="protein sequence ID" value="AAO81713.1"/>
    <property type="molecule type" value="Genomic_DNA"/>
</dbReference>
<dbReference type="RefSeq" id="NP_815643.1">
    <property type="nucleotide sequence ID" value="NC_004668.1"/>
</dbReference>
<dbReference type="RefSeq" id="WP_002364165.1">
    <property type="nucleotide sequence ID" value="NZ_KE136528.1"/>
</dbReference>
<dbReference type="SMR" id="Q833I5"/>
<dbReference type="STRING" id="226185.EF_1967"/>
<dbReference type="EnsemblBacteria" id="AAO81713">
    <property type="protein sequence ID" value="AAO81713"/>
    <property type="gene ID" value="EF_1967"/>
</dbReference>
<dbReference type="KEGG" id="efa:EF1967"/>
<dbReference type="PATRIC" id="fig|226185.45.peg.1558"/>
<dbReference type="eggNOG" id="COG4475">
    <property type="taxonomic scope" value="Bacteria"/>
</dbReference>
<dbReference type="HOGENOM" id="CLU_106658_0_0_9"/>
<dbReference type="Proteomes" id="UP000001415">
    <property type="component" value="Chromosome"/>
</dbReference>
<dbReference type="Gene3D" id="3.40.50.10360">
    <property type="entry name" value="Hypothetical protein TT1679"/>
    <property type="match status" value="1"/>
</dbReference>
<dbReference type="HAMAP" id="MF_00800">
    <property type="entry name" value="UPF0340"/>
    <property type="match status" value="1"/>
</dbReference>
<dbReference type="InterPro" id="IPR028345">
    <property type="entry name" value="Antibiotic_NAT-like"/>
</dbReference>
<dbReference type="InterPro" id="IPR006340">
    <property type="entry name" value="DUF436"/>
</dbReference>
<dbReference type="NCBIfam" id="TIGR01440">
    <property type="entry name" value="TIGR01440 family protein"/>
    <property type="match status" value="1"/>
</dbReference>
<dbReference type="Pfam" id="PF04260">
    <property type="entry name" value="DUF436"/>
    <property type="match status" value="1"/>
</dbReference>
<dbReference type="PIRSF" id="PIRSF007510">
    <property type="entry name" value="UCP007510"/>
    <property type="match status" value="1"/>
</dbReference>
<dbReference type="SUPFAM" id="SSF110710">
    <property type="entry name" value="TTHA0583/YokD-like"/>
    <property type="match status" value="1"/>
</dbReference>
<reference key="1">
    <citation type="journal article" date="2003" name="Science">
        <title>Role of mobile DNA in the evolution of vancomycin-resistant Enterococcus faecalis.</title>
        <authorList>
            <person name="Paulsen I.T."/>
            <person name="Banerjei L."/>
            <person name="Myers G.S.A."/>
            <person name="Nelson K.E."/>
            <person name="Seshadri R."/>
            <person name="Read T.D."/>
            <person name="Fouts D.E."/>
            <person name="Eisen J.A."/>
            <person name="Gill S.R."/>
            <person name="Heidelberg J.F."/>
            <person name="Tettelin H."/>
            <person name="Dodson R.J."/>
            <person name="Umayam L.A."/>
            <person name="Brinkac L.M."/>
            <person name="Beanan M.J."/>
            <person name="Daugherty S.C."/>
            <person name="DeBoy R.T."/>
            <person name="Durkin S.A."/>
            <person name="Kolonay J.F."/>
            <person name="Madupu R."/>
            <person name="Nelson W.C."/>
            <person name="Vamathevan J.J."/>
            <person name="Tran B."/>
            <person name="Upton J."/>
            <person name="Hansen T."/>
            <person name="Shetty J."/>
            <person name="Khouri H.M."/>
            <person name="Utterback T.R."/>
            <person name="Radune D."/>
            <person name="Ketchum K.A."/>
            <person name="Dougherty B.A."/>
            <person name="Fraser C.M."/>
        </authorList>
    </citation>
    <scope>NUCLEOTIDE SEQUENCE [LARGE SCALE GENOMIC DNA]</scope>
    <source>
        <strain>ATCC 700802 / V583</strain>
    </source>
</reference>
<accession>Q833I5</accession>
<organism>
    <name type="scientific">Enterococcus faecalis (strain ATCC 700802 / V583)</name>
    <dbReference type="NCBI Taxonomy" id="226185"/>
    <lineage>
        <taxon>Bacteria</taxon>
        <taxon>Bacillati</taxon>
        <taxon>Bacillota</taxon>
        <taxon>Bacilli</taxon>
        <taxon>Lactobacillales</taxon>
        <taxon>Enterococcaceae</taxon>
        <taxon>Enterococcus</taxon>
    </lineage>
</organism>
<gene>
    <name type="ordered locus">EF_1967</name>
</gene>
<sequence length="189" mass="20502">MTIDEKMLKEQLVTITEEVITAGNLKKGDLFVLGCTTSEVVGGVIGKNSSAEVGQWIVSTLIEQLDKKGISLAVQGCEHINRALAMERRVAEEKGFEIVSVVPQLHAGGSCSVAAFEKFDEPVEVEHIVAQAGIDIGDTSIGMHVKHVQVPLRLSIRTLGAAHVTALYSRPKYIGGPRAHYETTQERNR</sequence>